<dbReference type="EMBL" id="U51162">
    <property type="protein sequence ID" value="AAD00079.1"/>
    <property type="molecule type" value="mRNA"/>
</dbReference>
<dbReference type="RefSeq" id="NP_001231202.1">
    <property type="nucleotide sequence ID" value="NM_001244273.1"/>
</dbReference>
<dbReference type="SMR" id="Q9Z1E9"/>
<dbReference type="GlyCosmos" id="Q9Z1E9">
    <property type="glycosylation" value="5 sites, No reported glycans"/>
</dbReference>
<dbReference type="PaxDb" id="10029-NP_001231202.1"/>
<dbReference type="GeneID" id="100689240"/>
<dbReference type="KEGG" id="cge:100689240"/>
<dbReference type="CTD" id="2734"/>
<dbReference type="eggNOG" id="KOG3648">
    <property type="taxonomic scope" value="Eukaryota"/>
</dbReference>
<dbReference type="OrthoDB" id="2015434at2759"/>
<dbReference type="Proteomes" id="UP000694386">
    <property type="component" value="Unplaced"/>
</dbReference>
<dbReference type="Proteomes" id="UP001108280">
    <property type="component" value="Chromosome 3"/>
</dbReference>
<dbReference type="GO" id="GO:0000139">
    <property type="term" value="C:Golgi membrane"/>
    <property type="evidence" value="ECO:0007669"/>
    <property type="project" value="UniProtKB-SubCell"/>
</dbReference>
<dbReference type="GO" id="GO:0005815">
    <property type="term" value="C:microtubule organizing center"/>
    <property type="evidence" value="ECO:0007669"/>
    <property type="project" value="UniProtKB-SubCell"/>
</dbReference>
<dbReference type="GO" id="GO:0017134">
    <property type="term" value="F:fibroblast growth factor binding"/>
    <property type="evidence" value="ECO:0007669"/>
    <property type="project" value="TreeGrafter"/>
</dbReference>
<dbReference type="InterPro" id="IPR001893">
    <property type="entry name" value="Cys-rich_GLG1_repeat"/>
</dbReference>
<dbReference type="InterPro" id="IPR017873">
    <property type="entry name" value="Cys-rich_GLG1_repeat_euk"/>
</dbReference>
<dbReference type="InterPro" id="IPR039728">
    <property type="entry name" value="GLG1"/>
</dbReference>
<dbReference type="PANTHER" id="PTHR11884:SF1">
    <property type="entry name" value="GOLGI APPARATUS PROTEIN 1"/>
    <property type="match status" value="1"/>
</dbReference>
<dbReference type="PANTHER" id="PTHR11884">
    <property type="entry name" value="SELECTIN LIGAND RELATED"/>
    <property type="match status" value="1"/>
</dbReference>
<dbReference type="Pfam" id="PF00839">
    <property type="entry name" value="Cys_rich_FGFR"/>
    <property type="match status" value="15"/>
</dbReference>
<dbReference type="PROSITE" id="PS51289">
    <property type="entry name" value="GLG1_C_RICH"/>
    <property type="match status" value="16"/>
</dbReference>
<comment type="function">
    <text evidence="3">Binds fibroblast growth factor and E-selectin (cell-adhesion lectin on endothelial cells mediating the binding of neutrophils).</text>
</comment>
<comment type="subcellular location">
    <subcellularLocation>
        <location evidence="2">Golgi apparatus membrane</location>
        <topology evidence="4">Single-pass type I membrane protein</topology>
    </subcellularLocation>
    <subcellularLocation>
        <location evidence="2">Golgi outpost</location>
    </subcellularLocation>
    <subcellularLocation>
        <location evidence="2">Cytoplasm</location>
        <location evidence="2">Cytoskeleton</location>
        <location evidence="2">Microtubule organizing center</location>
    </subcellularLocation>
    <text evidence="2">Golgi medial cisternae. Localizes to the postsynaptic Golgi apparatus region, also named Golgi outpost, which shapes dendrite morphology by functioning as sites of acentrosomal microtubule nucleation.</text>
</comment>
<comment type="PTM">
    <text evidence="1">Fucosylation is essential for binding to E-selectin.</text>
</comment>
<comment type="PTM">
    <text evidence="2">N-glycosylated. Contains sialic acid residues.</text>
</comment>
<proteinExistence type="evidence at protein level"/>
<feature type="signal peptide" evidence="4">
    <location>
        <begin position="1"/>
        <end position="18"/>
    </location>
</feature>
<feature type="chain" id="PRO_0000011119" description="Golgi apparatus protein 1">
    <location>
        <begin position="19"/>
        <end position="1160"/>
    </location>
</feature>
<feature type="topological domain" description="Extracellular" evidence="4">
    <location>
        <begin position="19"/>
        <end position="1126"/>
    </location>
</feature>
<feature type="transmembrane region" description="Helical" evidence="4">
    <location>
        <begin position="1127"/>
        <end position="1147"/>
    </location>
</feature>
<feature type="topological domain" description="Cytoplasmic" evidence="4">
    <location>
        <begin position="1148"/>
        <end position="1160"/>
    </location>
</feature>
<feature type="repeat" description="Cys-rich GLG1 1">
    <location>
        <begin position="97"/>
        <end position="130"/>
    </location>
</feature>
<feature type="repeat" description="Cys-rich GLG1 2">
    <location>
        <begin position="131"/>
        <end position="193"/>
    </location>
</feature>
<feature type="repeat" description="Cys-rich GLG1 3">
    <location>
        <begin position="196"/>
        <end position="259"/>
    </location>
</feature>
<feature type="repeat" description="Cys-rich GLG1 4">
    <location>
        <begin position="267"/>
        <end position="327"/>
    </location>
</feature>
<feature type="repeat" description="Cys-rich GLG1 5">
    <location>
        <begin position="328"/>
        <end position="394"/>
    </location>
</feature>
<feature type="repeat" description="Cys-rich GLG1 6">
    <location>
        <begin position="395"/>
        <end position="454"/>
    </location>
</feature>
<feature type="repeat" description="Cys-rich GLG1 7">
    <location>
        <begin position="456"/>
        <end position="518"/>
    </location>
</feature>
<feature type="repeat" description="Cys-rich GLG1 8">
    <location>
        <begin position="519"/>
        <end position="585"/>
    </location>
</feature>
<feature type="repeat" description="Cys-rich GLG1 9">
    <location>
        <begin position="590"/>
        <end position="649"/>
    </location>
</feature>
<feature type="repeat" description="Cys-rich GLG1 10">
    <location>
        <begin position="651"/>
        <end position="709"/>
    </location>
</feature>
<feature type="repeat" description="Cys-rich GLG1 11">
    <location>
        <begin position="710"/>
        <end position="769"/>
    </location>
</feature>
<feature type="repeat" description="Cys-rich GLG1 12">
    <location>
        <begin position="777"/>
        <end position="837"/>
    </location>
</feature>
<feature type="repeat" description="Cys-rich GLG1 13">
    <location>
        <begin position="839"/>
        <end position="892"/>
    </location>
</feature>
<feature type="repeat" description="Cys-rich GLG1 14">
    <location>
        <begin position="893"/>
        <end position="960"/>
    </location>
</feature>
<feature type="repeat" description="Cys-rich GLG1 15">
    <location>
        <begin position="961"/>
        <end position="1016"/>
    </location>
</feature>
<feature type="repeat" description="Cys-rich GLG1 16">
    <location>
        <begin position="1022"/>
        <end position="1082"/>
    </location>
</feature>
<feature type="region of interest" description="Disordered" evidence="5">
    <location>
        <begin position="52"/>
        <end position="94"/>
    </location>
</feature>
<feature type="compositionally biased region" description="Low complexity" evidence="5">
    <location>
        <begin position="52"/>
        <end position="79"/>
    </location>
</feature>
<feature type="compositionally biased region" description="Gly residues" evidence="5">
    <location>
        <begin position="80"/>
        <end position="91"/>
    </location>
</feature>
<feature type="modified residue" description="Phosphoserine" evidence="1">
    <location>
        <position position="942"/>
    </location>
</feature>
<feature type="glycosylation site" description="N-linked (GlcNAc...) asparagine" evidence="4">
    <location>
        <position position="146"/>
    </location>
</feature>
<feature type="glycosylation site" description="N-linked (GlcNAc...) asparagine" evidence="4">
    <location>
        <position position="191"/>
    </location>
</feature>
<feature type="glycosylation site" description="N-linked (GlcNAc...) asparagine" evidence="4">
    <location>
        <position position="562"/>
    </location>
</feature>
<feature type="glycosylation site" description="N-linked (GlcNAc...) asparagine" evidence="4">
    <location>
        <position position="658"/>
    </location>
</feature>
<feature type="glycosylation site" description="N-linked (GlcNAc...) asparagine" evidence="4">
    <location>
        <position position="767"/>
    </location>
</feature>
<sequence length="1160" mass="132326">MFRLSAALQLLLLAATGAQNNHGQVQVPGANIGPLLGQAEGGSPAGQQLLQLSQQQKQPPQQQQQQQPAFPAGGPPARRGGAGPGGTGGGWKLAEEESCREDVTRVCPKHTWSNNLAVLECLQDVREPENEISSDCNHLLWNYKLNLTTDPKFESVAREVCKSTISEIKECAEEPVGKGYMVSCLVDHRGNITEYQCHQYITKMTAIIFSDYRLICGFMDDCKNDINLLKCGSIRLGEKDAHSQGEVVSCLEKGLVKEAEEKEPKIQVSELCKKAILRVAELSSDDFHLDRHLYFACRDDRERFCENTQAGEGRVYKCLFNHKFEESMSEKCREALTTRQKLIAQDYKVSYSLAKSCKSDLKKYRCNVENLPRSREARLSYLLMCLESAVHRGRQVSSECQGEMLDYRRMLMEDFSLSPEIILSCRGEIEHHCSGLHRKGRTLHCLMKVIRGEKGNLGMNCQQALQTLIQETDPGADYRIDRALNEACESVIQTACKHIRSGDPMILSCLMEHLYTEKMVEDCEHRLLELQYFISRDWKLDPVLYRKCQGDASRLCHTHGWNETSELMPPGAVFSCLYRHAYRTEEQGRRLSRECRAEVQRILHQRAMDVKLDPALQDKCLIDLGKWCSEKTETGQELECLQDHLDDLAVECRDIVGNLTELESEDIQIEALLMRACEPIIQNFCHDVADNQIDSGDLMECLIQNKHQKDMNEKCAIGVTHFQLVQMKDFRFSYKFKMACKEDVLKLCPNIKKKVDVVICLSTTVRNDTLQEAKEHRVSLKCRKQLRVEELEMTEDIRLEPDLYEACKSDIRGYCSTVQYGNAQIIECLKENKKQLSTRCHQKVFKLQETEMMDPELDYTLMRVCKQMIKRFCPEADSKTMLQCLKQNKNSELMDPKCKQMITKRQITQNTDYRLNPVLRKACKADIPKFCHGILTKAKDDSELEGQVISCLKLRYADQRLSSDCEDQIRIIIQESALDYRLDPQLQLHCSDEIANLCAEEAAAQEQTGQVEECLKVNLLKIRTELCKKEVLNMLKESKADIFVDPVLHTACALDIKHHCAAITPGRGRQMSCLMEALEDKRVRLQPECKKRLNDRIEMWSYAAKVAPADGFSDLAMQVMTSPSKNYILSVISGSICILFLIGLMCGRITKRVTRELKDR</sequence>
<gene>
    <name type="primary">GLG1</name>
    <name type="synonym">ESL1</name>
    <name type="synonym">MG160</name>
</gene>
<reference key="1">
    <citation type="journal article" date="1997" name="Biochem. J.">
        <title>Latent transforming growth factor-beta complex in Chinese hamster ovary cells contains the multifunctional cysteine-rich fibroblast growth factor receptor, also termed E-selectin-ligand or MG-160.</title>
        <authorList>
            <person name="Olofsson A."/>
            <person name="Hellman U."/>
            <person name="Ten Dijke P."/>
            <person name="Grimsby S."/>
            <person name="Ichijo H."/>
            <person name="Moren A."/>
            <person name="Miyazono K."/>
            <person name="Heldin C.-H."/>
        </authorList>
    </citation>
    <scope>NUCLEOTIDE SEQUENCE [MRNA]</scope>
    <scope>PROTEIN SEQUENCE OF 80-87; 180-201; 215-223; 240-252; 266-273; 342-348; 442-448; 527-536; 632-645; 847-858; 930-937 AND 961-977</scope>
    <source>
        <tissue>Ovary</tissue>
    </source>
</reference>
<evidence type="ECO:0000250" key="1">
    <source>
        <dbReference type="UniProtKB" id="Q61543"/>
    </source>
</evidence>
<evidence type="ECO:0000250" key="2">
    <source>
        <dbReference type="UniProtKB" id="Q62638"/>
    </source>
</evidence>
<evidence type="ECO:0000250" key="3">
    <source>
        <dbReference type="UniProtKB" id="Q92896"/>
    </source>
</evidence>
<evidence type="ECO:0000255" key="4"/>
<evidence type="ECO:0000256" key="5">
    <source>
        <dbReference type="SAM" id="MobiDB-lite"/>
    </source>
</evidence>
<keyword id="KW-0963">Cytoplasm</keyword>
<keyword id="KW-0206">Cytoskeleton</keyword>
<keyword id="KW-0903">Direct protein sequencing</keyword>
<keyword id="KW-0325">Glycoprotein</keyword>
<keyword id="KW-0333">Golgi apparatus</keyword>
<keyword id="KW-0472">Membrane</keyword>
<keyword id="KW-0597">Phosphoprotein</keyword>
<keyword id="KW-0677">Repeat</keyword>
<keyword id="KW-0730">Sialic acid</keyword>
<keyword id="KW-0732">Signal</keyword>
<keyword id="KW-0812">Transmembrane</keyword>
<keyword id="KW-1133">Transmembrane helix</keyword>
<name>GSLG1_CRIGR</name>
<organism>
    <name type="scientific">Cricetulus griseus</name>
    <name type="common">Chinese hamster</name>
    <name type="synonym">Cricetulus barabensis griseus</name>
    <dbReference type="NCBI Taxonomy" id="10029"/>
    <lineage>
        <taxon>Eukaryota</taxon>
        <taxon>Metazoa</taxon>
        <taxon>Chordata</taxon>
        <taxon>Craniata</taxon>
        <taxon>Vertebrata</taxon>
        <taxon>Euteleostomi</taxon>
        <taxon>Mammalia</taxon>
        <taxon>Eutheria</taxon>
        <taxon>Euarchontoglires</taxon>
        <taxon>Glires</taxon>
        <taxon>Rodentia</taxon>
        <taxon>Myomorpha</taxon>
        <taxon>Muroidea</taxon>
        <taxon>Cricetidae</taxon>
        <taxon>Cricetinae</taxon>
        <taxon>Cricetulus</taxon>
    </lineage>
</organism>
<protein>
    <recommendedName>
        <fullName>Golgi apparatus protein 1</fullName>
    </recommendedName>
    <alternativeName>
        <fullName>E-selectin ligand 1</fullName>
        <shortName>ESL-1</shortName>
    </alternativeName>
    <alternativeName>
        <fullName>Golgi sialoglycoprotein MG-160</fullName>
    </alternativeName>
    <alternativeName>
        <fullName>Latent TGF-beta complexed protein 1</fullName>
        <shortName>LTCP-1</shortName>
    </alternativeName>
</protein>
<accession>Q9Z1E9</accession>